<feature type="chain" id="PRO_0000247842" description="Actin-related protein 5">
    <location>
        <begin position="1"/>
        <end position="607"/>
    </location>
</feature>
<feature type="region of interest" description="Disordered" evidence="2">
    <location>
        <begin position="584"/>
        <end position="607"/>
    </location>
</feature>
<feature type="coiled-coil region" evidence="1">
    <location>
        <begin position="288"/>
        <end position="327"/>
    </location>
</feature>
<feature type="coiled-coil region" evidence="1">
    <location>
        <begin position="355"/>
        <end position="384"/>
    </location>
</feature>
<feature type="compositionally biased region" description="Low complexity" evidence="2">
    <location>
        <begin position="584"/>
        <end position="596"/>
    </location>
</feature>
<feature type="compositionally biased region" description="Gly residues" evidence="2">
    <location>
        <begin position="597"/>
        <end position="607"/>
    </location>
</feature>
<feature type="cross-link" description="Glycyl lysine isopeptide (Lys-Gly) (interchain with G-Cter in SUMO2)" evidence="12">
    <location>
        <position position="283"/>
    </location>
</feature>
<feature type="sequence variant" id="VAR_027158" description="In dbSNP:rs17853829." evidence="3">
    <original>R</original>
    <variation>L</variation>
    <location>
        <position position="298"/>
    </location>
</feature>
<feature type="sequence variant" id="VAR_048189" description="In dbSNP:rs35805905.">
    <original>I</original>
    <variation>L</variation>
    <location>
        <position position="461"/>
    </location>
</feature>
<feature type="sequence variant" id="VAR_027159" description="In dbSNP:rs2245231." evidence="3">
    <original>I</original>
    <variation>V</variation>
    <location>
        <position position="483"/>
    </location>
</feature>
<feature type="sequence variant" id="VAR_027160" description="In dbSNP:rs3752289.">
    <original>P</original>
    <variation>L</variation>
    <location>
        <position position="580"/>
    </location>
</feature>
<feature type="sequence conflict" description="In Ref. 4; AAO65164." evidence="11" ref="4">
    <original>RG</original>
    <variation>AR</variation>
    <location>
        <begin position="69"/>
        <end position="70"/>
    </location>
</feature>
<feature type="sequence conflict" description="In Ref. 1; BAB14270." evidence="11" ref="1">
    <original>K</original>
    <variation>E</variation>
    <location>
        <position position="481"/>
    </location>
</feature>
<evidence type="ECO:0000255" key="1"/>
<evidence type="ECO:0000256" key="2">
    <source>
        <dbReference type="SAM" id="MobiDB-lite"/>
    </source>
</evidence>
<evidence type="ECO:0000269" key="3">
    <source>
    </source>
</evidence>
<evidence type="ECO:0000269" key="4">
    <source>
    </source>
</evidence>
<evidence type="ECO:0000269" key="5">
    <source>
    </source>
</evidence>
<evidence type="ECO:0000269" key="6">
    <source>
    </source>
</evidence>
<evidence type="ECO:0000269" key="7">
    <source>
    </source>
</evidence>
<evidence type="ECO:0000269" key="8">
    <source>
    </source>
</evidence>
<evidence type="ECO:0000269" key="9">
    <source>
    </source>
</evidence>
<evidence type="ECO:0000269" key="10">
    <source>
    </source>
</evidence>
<evidence type="ECO:0000305" key="11"/>
<evidence type="ECO:0007744" key="12">
    <source>
    </source>
</evidence>
<protein>
    <recommendedName>
        <fullName>Actin-related protein 5</fullName>
        <shortName>hARP5</shortName>
    </recommendedName>
    <alternativeName>
        <fullName>Sarcoma antigen NY-SAR-16</fullName>
    </alternativeName>
</protein>
<comment type="function">
    <text evidence="8 9">Proposed core component of the chromatin remodeling INO80 complex which is involved in transcriptional regulation, DNA replication and probably DNA repair. Involved in DNA double-strand break repair and UV-damage excision repair.</text>
</comment>
<comment type="subunit">
    <text evidence="4 6 7 9 10">Component of the chromatin remodeling INO80 complex; specifically part of a complex module associated with the helicase ATP-binding and the helicase C-terminal domain of INO80. Interacts with DDB1. Interacts with ACTR8; the interaction is observed in asynchronous (interphase) cells but not in metaphase-arrested cells indicative for a possible dissociation of the INO80 complex in mitotic cells.</text>
</comment>
<comment type="interaction">
    <interactant intactId="EBI-769418">
        <id>Q9H9F9</id>
    </interactant>
    <interactant intactId="EBI-769597">
        <id>Q9H981</id>
        <label>ACTR8</label>
    </interactant>
    <organismsDiffer>false</organismsDiffer>
    <experiments>3</experiments>
</comment>
<comment type="interaction">
    <interactant intactId="EBI-769418">
        <id>Q9H9F9</id>
    </interactant>
    <interactant intactId="EBI-350322">
        <id>Q16531</id>
        <label>DDB1</label>
    </interactant>
    <organismsDiffer>false</organismsDiffer>
    <experiments>4</experiments>
</comment>
<comment type="interaction">
    <interactant intactId="EBI-769418">
        <id>Q9H9F9</id>
    </interactant>
    <interactant intactId="EBI-769345">
        <id>Q9ULG1</id>
        <label>INO80</label>
    </interactant>
    <organismsDiffer>false</organismsDiffer>
    <experiments>10</experiments>
</comment>
<comment type="interaction">
    <interactant intactId="EBI-769418">
        <id>Q9H9F9</id>
    </interactant>
    <interactant intactId="EBI-722540">
        <id>Q6PI98</id>
        <label>INO80C</label>
    </interactant>
    <organismsDiffer>false</organismsDiffer>
    <experiments>4</experiments>
</comment>
<comment type="interaction">
    <interactant intactId="EBI-769418">
        <id>Q9H9F9</id>
    </interactant>
    <interactant intactId="EBI-368321">
        <id>O60437</id>
        <label>PPL</label>
    </interactant>
    <organismsDiffer>false</organismsDiffer>
    <experiments>3</experiments>
</comment>
<comment type="subcellular location">
    <subcellularLocation>
        <location evidence="5 6 8">Nucleus</location>
    </subcellularLocation>
    <subcellularLocation>
        <location evidence="8">Cytoplasm</location>
    </subcellularLocation>
    <text>Predominantly nuclear but undergoes nucleo-cytoplasmic shuttling (PubMed:19014934). Localized to interphase nuclei, but not nucleoli; excluded from chromosomes as mitosis progresses (PubMed:18163988).</text>
</comment>
<comment type="similarity">
    <text evidence="11">Belongs to the actin family. ARP5 subfamily.</text>
</comment>
<comment type="sequence caution" evidence="11">
    <conflict type="frameshift">
        <sequence resource="EMBL-CDS" id="AAO65164"/>
    </conflict>
</comment>
<gene>
    <name type="primary">ACTR5</name>
    <name type="synonym">ARP5</name>
</gene>
<sequence length="607" mass="68297">MAANVFPFRDARAAPDPVLEAGPVAHGPLPVPLVLDNGSFQVRAGWACPGQDPGPEPRLQFRAVCARGRGGARGASGPQVGNALGSLEPLRWMLRSPFDRNVPVNLELQELLLDYSFQHLGVSSQGCVDHPIVLTEAVCNPLYSRQMMSELLFECYGIPKVAYGIDSLFSFYHNKPKNSMCSGLIISSGYQCTHVLPILEGRLDAKNCKRINLGGSQAAGYLQRLLQLKYPGHLAAITLSRMEEILHEHSYIAEDYVEELHKWRCPDYYENNVHKMQLPFSSKLLGSTLTSEEKQERRQQQLRRLQELNARRREEKLQLDQERLDRLLYVQELLEDGQMDQFHKALIELNMDSPEELQSYIQKLSIAVEQAKQKILQAEVNLEVDVVDSKPETPDLEQLEPSLEDVESMNDFDPLFSEETPGVEKPVTTVQPVFNLAAYHQLFVGTERIRAPEIIFQPSLIGEEQAGIAETLQYILDRYPKDIQEMLVQNVFLTGGNTMYPGMKARMEKELLEMRPFRSSFQVQLASNPVLDAWYGARDWALNHLDDNEVWITRKEYEEKGGEYLKEHCASNIYVPIRLPKQASRSSDAQASSKGSAAGGGGAGEQA</sequence>
<proteinExistence type="evidence at protein level"/>
<dbReference type="EMBL" id="AK022847">
    <property type="protein sequence ID" value="BAB14270.1"/>
    <property type="molecule type" value="mRNA"/>
</dbReference>
<dbReference type="EMBL" id="AL133519">
    <property type="status" value="NOT_ANNOTATED_CDS"/>
    <property type="molecule type" value="Genomic_DNA"/>
</dbReference>
<dbReference type="EMBL" id="BC001324">
    <property type="protein sequence ID" value="AAH01324.1"/>
    <property type="molecule type" value="mRNA"/>
</dbReference>
<dbReference type="EMBL" id="BC006162">
    <property type="protein sequence ID" value="AAH06162.1"/>
    <property type="molecule type" value="mRNA"/>
</dbReference>
<dbReference type="EMBL" id="BC038402">
    <property type="protein sequence ID" value="AAH38402.1"/>
    <property type="molecule type" value="mRNA"/>
</dbReference>
<dbReference type="EMBL" id="AY211911">
    <property type="protein sequence ID" value="AAO65164.1"/>
    <property type="status" value="ALT_FRAME"/>
    <property type="molecule type" value="mRNA"/>
</dbReference>
<dbReference type="CCDS" id="CCDS13308.1"/>
<dbReference type="RefSeq" id="NP_079131.3">
    <property type="nucleotide sequence ID" value="NM_024855.3"/>
</dbReference>
<dbReference type="PDB" id="6HTS">
    <property type="method" value="EM"/>
    <property type="resolution" value="4.80 A"/>
    <property type="chains" value="H=1-607"/>
</dbReference>
<dbReference type="PDB" id="7ZI4">
    <property type="method" value="EM"/>
    <property type="resolution" value="3.20 A"/>
    <property type="chains" value="H=1-607"/>
</dbReference>
<dbReference type="PDBsum" id="6HTS"/>
<dbReference type="PDBsum" id="7ZI4"/>
<dbReference type="EMDB" id="EMD-14737"/>
<dbReference type="EMDB" id="EMD-3954"/>
<dbReference type="SMR" id="Q9H9F9"/>
<dbReference type="BioGRID" id="122993">
    <property type="interactions" value="80"/>
</dbReference>
<dbReference type="ComplexPortal" id="CPX-846">
    <property type="entry name" value="INO80 chromatin remodeling complex"/>
</dbReference>
<dbReference type="CORUM" id="Q9H9F9"/>
<dbReference type="DIP" id="DIP-34297N"/>
<dbReference type="FunCoup" id="Q9H9F9">
    <property type="interactions" value="2974"/>
</dbReference>
<dbReference type="IntAct" id="Q9H9F9">
    <property type="interactions" value="65"/>
</dbReference>
<dbReference type="MINT" id="Q9H9F9"/>
<dbReference type="STRING" id="9606.ENSP00000243903"/>
<dbReference type="iPTMnet" id="Q9H9F9"/>
<dbReference type="PhosphoSitePlus" id="Q9H9F9"/>
<dbReference type="BioMuta" id="ACTR5"/>
<dbReference type="DMDM" id="110832751"/>
<dbReference type="jPOST" id="Q9H9F9"/>
<dbReference type="MassIVE" id="Q9H9F9"/>
<dbReference type="PaxDb" id="9606-ENSP00000243903"/>
<dbReference type="PeptideAtlas" id="Q9H9F9"/>
<dbReference type="ProteomicsDB" id="81319"/>
<dbReference type="Pumba" id="Q9H9F9"/>
<dbReference type="Antibodypedia" id="43543">
    <property type="antibodies" value="129 antibodies from 22 providers"/>
</dbReference>
<dbReference type="DNASU" id="79913"/>
<dbReference type="Ensembl" id="ENST00000243903.6">
    <property type="protein sequence ID" value="ENSP00000243903.4"/>
    <property type="gene ID" value="ENSG00000101442.10"/>
</dbReference>
<dbReference type="GeneID" id="79913"/>
<dbReference type="KEGG" id="hsa:79913"/>
<dbReference type="MANE-Select" id="ENST00000243903.6">
    <property type="protein sequence ID" value="ENSP00000243903.4"/>
    <property type="RefSeq nucleotide sequence ID" value="NM_024855.4"/>
    <property type="RefSeq protein sequence ID" value="NP_079131.3"/>
</dbReference>
<dbReference type="UCSC" id="uc002xjd.3">
    <property type="organism name" value="human"/>
</dbReference>
<dbReference type="AGR" id="HGNC:14671"/>
<dbReference type="CTD" id="79913"/>
<dbReference type="DisGeNET" id="79913"/>
<dbReference type="GeneCards" id="ACTR5"/>
<dbReference type="HGNC" id="HGNC:14671">
    <property type="gene designation" value="ACTR5"/>
</dbReference>
<dbReference type="HPA" id="ENSG00000101442">
    <property type="expression patterns" value="Low tissue specificity"/>
</dbReference>
<dbReference type="MIM" id="619730">
    <property type="type" value="gene"/>
</dbReference>
<dbReference type="neXtProt" id="NX_Q9H9F9"/>
<dbReference type="OpenTargets" id="ENSG00000101442"/>
<dbReference type="PharmGKB" id="PA24490"/>
<dbReference type="VEuPathDB" id="HostDB:ENSG00000101442"/>
<dbReference type="eggNOG" id="KOG0681">
    <property type="taxonomic scope" value="Eukaryota"/>
</dbReference>
<dbReference type="GeneTree" id="ENSGT00720000108866"/>
<dbReference type="HOGENOM" id="CLU_008246_2_0_1"/>
<dbReference type="InParanoid" id="Q9H9F9"/>
<dbReference type="OMA" id="YPFTEHV"/>
<dbReference type="OrthoDB" id="7340501at2759"/>
<dbReference type="PAN-GO" id="Q9H9F9">
    <property type="GO annotations" value="3 GO annotations based on evolutionary models"/>
</dbReference>
<dbReference type="PhylomeDB" id="Q9H9F9"/>
<dbReference type="TreeFam" id="TF324227"/>
<dbReference type="PathwayCommons" id="Q9H9F9"/>
<dbReference type="Reactome" id="R-HSA-5689603">
    <property type="pathway name" value="UCH proteinases"/>
</dbReference>
<dbReference type="Reactome" id="R-HSA-5696394">
    <property type="pathway name" value="DNA Damage Recognition in GG-NER"/>
</dbReference>
<dbReference type="SignaLink" id="Q9H9F9"/>
<dbReference type="SIGNOR" id="Q9H9F9"/>
<dbReference type="BioGRID-ORCS" id="79913">
    <property type="hits" value="167 hits in 1172 CRISPR screens"/>
</dbReference>
<dbReference type="ChiTaRS" id="ACTR5">
    <property type="organism name" value="human"/>
</dbReference>
<dbReference type="GenomeRNAi" id="79913"/>
<dbReference type="Pharos" id="Q9H9F9">
    <property type="development level" value="Tbio"/>
</dbReference>
<dbReference type="PRO" id="PR:Q9H9F9"/>
<dbReference type="Proteomes" id="UP000005640">
    <property type="component" value="Chromosome 20"/>
</dbReference>
<dbReference type="RNAct" id="Q9H9F9">
    <property type="molecule type" value="protein"/>
</dbReference>
<dbReference type="Bgee" id="ENSG00000101442">
    <property type="expression patterns" value="Expressed in hair follicle and 180 other cell types or tissues"/>
</dbReference>
<dbReference type="GO" id="GO:0005737">
    <property type="term" value="C:cytoplasm"/>
    <property type="evidence" value="ECO:0000314"/>
    <property type="project" value="UniProtKB"/>
</dbReference>
<dbReference type="GO" id="GO:0031011">
    <property type="term" value="C:Ino80 complex"/>
    <property type="evidence" value="ECO:0000314"/>
    <property type="project" value="UniProtKB"/>
</dbReference>
<dbReference type="GO" id="GO:0005654">
    <property type="term" value="C:nucleoplasm"/>
    <property type="evidence" value="ECO:0000304"/>
    <property type="project" value="Reactome"/>
</dbReference>
<dbReference type="GO" id="GO:0005634">
    <property type="term" value="C:nucleus"/>
    <property type="evidence" value="ECO:0000314"/>
    <property type="project" value="UniProtKB"/>
</dbReference>
<dbReference type="GO" id="GO:0006338">
    <property type="term" value="P:chromatin remodeling"/>
    <property type="evidence" value="ECO:0000314"/>
    <property type="project" value="ComplexPortal"/>
</dbReference>
<dbReference type="GO" id="GO:0006310">
    <property type="term" value="P:DNA recombination"/>
    <property type="evidence" value="ECO:0007669"/>
    <property type="project" value="UniProtKB-KW"/>
</dbReference>
<dbReference type="GO" id="GO:0006302">
    <property type="term" value="P:double-strand break repair"/>
    <property type="evidence" value="ECO:0000315"/>
    <property type="project" value="UniProtKB"/>
</dbReference>
<dbReference type="GO" id="GO:0045739">
    <property type="term" value="P:positive regulation of DNA repair"/>
    <property type="evidence" value="ECO:0000266"/>
    <property type="project" value="ComplexPortal"/>
</dbReference>
<dbReference type="GO" id="GO:0045893">
    <property type="term" value="P:positive regulation of DNA-templated transcription"/>
    <property type="evidence" value="ECO:0000315"/>
    <property type="project" value="ComplexPortal"/>
</dbReference>
<dbReference type="GO" id="GO:1904507">
    <property type="term" value="P:positive regulation of telomere maintenance in response to DNA damage"/>
    <property type="evidence" value="ECO:0000266"/>
    <property type="project" value="ComplexPortal"/>
</dbReference>
<dbReference type="GO" id="GO:0051726">
    <property type="term" value="P:regulation of cell cycle"/>
    <property type="evidence" value="ECO:0000315"/>
    <property type="project" value="ComplexPortal"/>
</dbReference>
<dbReference type="GO" id="GO:0033044">
    <property type="term" value="P:regulation of chromosome organization"/>
    <property type="evidence" value="ECO:0000315"/>
    <property type="project" value="ComplexPortal"/>
</dbReference>
<dbReference type="GO" id="GO:0006282">
    <property type="term" value="P:regulation of DNA repair"/>
    <property type="evidence" value="ECO:0000266"/>
    <property type="project" value="ComplexPortal"/>
</dbReference>
<dbReference type="GO" id="GO:0006275">
    <property type="term" value="P:regulation of DNA replication"/>
    <property type="evidence" value="ECO:0000315"/>
    <property type="project" value="ComplexPortal"/>
</dbReference>
<dbReference type="GO" id="GO:0060382">
    <property type="term" value="P:regulation of DNA strand elongation"/>
    <property type="evidence" value="ECO:0000315"/>
    <property type="project" value="ComplexPortal"/>
</dbReference>
<dbReference type="GO" id="GO:0006355">
    <property type="term" value="P:regulation of DNA-templated transcription"/>
    <property type="evidence" value="ECO:0000318"/>
    <property type="project" value="GO_Central"/>
</dbReference>
<dbReference type="GO" id="GO:0045995">
    <property type="term" value="P:regulation of embryonic development"/>
    <property type="evidence" value="ECO:0000266"/>
    <property type="project" value="ComplexPortal"/>
</dbReference>
<dbReference type="GO" id="GO:0000723">
    <property type="term" value="P:telomere maintenance"/>
    <property type="evidence" value="ECO:0000266"/>
    <property type="project" value="ComplexPortal"/>
</dbReference>
<dbReference type="GO" id="GO:0070914">
    <property type="term" value="P:UV-damage excision repair"/>
    <property type="evidence" value="ECO:0000315"/>
    <property type="project" value="UniProtKB"/>
</dbReference>
<dbReference type="CDD" id="cd10211">
    <property type="entry name" value="ASKHA_NBD_Arp5"/>
    <property type="match status" value="1"/>
</dbReference>
<dbReference type="FunFam" id="3.30.420.40:FF:000048">
    <property type="entry name" value="ARP5 actin-related protein 5 homolog"/>
    <property type="match status" value="1"/>
</dbReference>
<dbReference type="FunFam" id="3.30.420.40:FF:000098">
    <property type="entry name" value="ARP5 actin-related protein 5 homolog"/>
    <property type="match status" value="1"/>
</dbReference>
<dbReference type="FunFam" id="3.30.420.40:FF:000122">
    <property type="entry name" value="ARP5 actin-related protein 5 homolog"/>
    <property type="match status" value="1"/>
</dbReference>
<dbReference type="FunFam" id="3.90.640.10:FF:000016">
    <property type="entry name" value="ARP5 actin-related protein 5 homolog"/>
    <property type="match status" value="1"/>
</dbReference>
<dbReference type="FunFam" id="3.90.640.10:FF:000019">
    <property type="entry name" value="ARP5 actin-related protein 5 homolog"/>
    <property type="match status" value="1"/>
</dbReference>
<dbReference type="FunFam" id="3.30.420.40:FF:000058">
    <property type="entry name" value="Putative actin-related protein 5"/>
    <property type="match status" value="1"/>
</dbReference>
<dbReference type="Gene3D" id="3.30.420.40">
    <property type="match status" value="4"/>
</dbReference>
<dbReference type="Gene3D" id="3.90.640.10">
    <property type="entry name" value="Actin, Chain A, domain 4"/>
    <property type="match status" value="2"/>
</dbReference>
<dbReference type="InterPro" id="IPR004000">
    <property type="entry name" value="Actin"/>
</dbReference>
<dbReference type="InterPro" id="IPR004001">
    <property type="entry name" value="Actin_CS"/>
</dbReference>
<dbReference type="InterPro" id="IPR043129">
    <property type="entry name" value="ATPase_NBD"/>
</dbReference>
<dbReference type="PANTHER" id="PTHR11937">
    <property type="entry name" value="ACTIN"/>
    <property type="match status" value="1"/>
</dbReference>
<dbReference type="Pfam" id="PF00022">
    <property type="entry name" value="Actin"/>
    <property type="match status" value="2"/>
</dbReference>
<dbReference type="SMART" id="SM00268">
    <property type="entry name" value="ACTIN"/>
    <property type="match status" value="1"/>
</dbReference>
<dbReference type="SUPFAM" id="SSF53067">
    <property type="entry name" value="Actin-like ATPase domain"/>
    <property type="match status" value="2"/>
</dbReference>
<dbReference type="PROSITE" id="PS00432">
    <property type="entry name" value="ACTINS_2"/>
    <property type="match status" value="1"/>
</dbReference>
<name>ARP5_HUMAN</name>
<keyword id="KW-0002">3D-structure</keyword>
<keyword id="KW-0175">Coiled coil</keyword>
<keyword id="KW-0963">Cytoplasm</keyword>
<keyword id="KW-0227">DNA damage</keyword>
<keyword id="KW-0233">DNA recombination</keyword>
<keyword id="KW-0234">DNA repair</keyword>
<keyword id="KW-1017">Isopeptide bond</keyword>
<keyword id="KW-0539">Nucleus</keyword>
<keyword id="KW-1267">Proteomics identification</keyword>
<keyword id="KW-1185">Reference proteome</keyword>
<keyword id="KW-0804">Transcription</keyword>
<keyword id="KW-0805">Transcription regulation</keyword>
<keyword id="KW-0832">Ubl conjugation</keyword>
<accession>Q9H9F9</accession>
<accession>Q86WF7</accession>
<accession>Q8IUY5</accession>
<accession>Q8N724</accession>
<accession>Q9BRN0</accession>
<accession>Q9BVB7</accession>
<organism>
    <name type="scientific">Homo sapiens</name>
    <name type="common">Human</name>
    <dbReference type="NCBI Taxonomy" id="9606"/>
    <lineage>
        <taxon>Eukaryota</taxon>
        <taxon>Metazoa</taxon>
        <taxon>Chordata</taxon>
        <taxon>Craniata</taxon>
        <taxon>Vertebrata</taxon>
        <taxon>Euteleostomi</taxon>
        <taxon>Mammalia</taxon>
        <taxon>Eutheria</taxon>
        <taxon>Euarchontoglires</taxon>
        <taxon>Primates</taxon>
        <taxon>Haplorrhini</taxon>
        <taxon>Catarrhini</taxon>
        <taxon>Hominidae</taxon>
        <taxon>Homo</taxon>
    </lineage>
</organism>
<reference key="1">
    <citation type="journal article" date="2004" name="Nat. Genet.">
        <title>Complete sequencing and characterization of 21,243 full-length human cDNAs.</title>
        <authorList>
            <person name="Ota T."/>
            <person name="Suzuki Y."/>
            <person name="Nishikawa T."/>
            <person name="Otsuki T."/>
            <person name="Sugiyama T."/>
            <person name="Irie R."/>
            <person name="Wakamatsu A."/>
            <person name="Hayashi K."/>
            <person name="Sato H."/>
            <person name="Nagai K."/>
            <person name="Kimura K."/>
            <person name="Makita H."/>
            <person name="Sekine M."/>
            <person name="Obayashi M."/>
            <person name="Nishi T."/>
            <person name="Shibahara T."/>
            <person name="Tanaka T."/>
            <person name="Ishii S."/>
            <person name="Yamamoto J."/>
            <person name="Saito K."/>
            <person name="Kawai Y."/>
            <person name="Isono Y."/>
            <person name="Nakamura Y."/>
            <person name="Nagahari K."/>
            <person name="Murakami K."/>
            <person name="Yasuda T."/>
            <person name="Iwayanagi T."/>
            <person name="Wagatsuma M."/>
            <person name="Shiratori A."/>
            <person name="Sudo H."/>
            <person name="Hosoiri T."/>
            <person name="Kaku Y."/>
            <person name="Kodaira H."/>
            <person name="Kondo H."/>
            <person name="Sugawara M."/>
            <person name="Takahashi M."/>
            <person name="Kanda K."/>
            <person name="Yokoi T."/>
            <person name="Furuya T."/>
            <person name="Kikkawa E."/>
            <person name="Omura Y."/>
            <person name="Abe K."/>
            <person name="Kamihara K."/>
            <person name="Katsuta N."/>
            <person name="Sato K."/>
            <person name="Tanikawa M."/>
            <person name="Yamazaki M."/>
            <person name="Ninomiya K."/>
            <person name="Ishibashi T."/>
            <person name="Yamashita H."/>
            <person name="Murakawa K."/>
            <person name="Fujimori K."/>
            <person name="Tanai H."/>
            <person name="Kimata M."/>
            <person name="Watanabe M."/>
            <person name="Hiraoka S."/>
            <person name="Chiba Y."/>
            <person name="Ishida S."/>
            <person name="Ono Y."/>
            <person name="Takiguchi S."/>
            <person name="Watanabe S."/>
            <person name="Yosida M."/>
            <person name="Hotuta T."/>
            <person name="Kusano J."/>
            <person name="Kanehori K."/>
            <person name="Takahashi-Fujii A."/>
            <person name="Hara H."/>
            <person name="Tanase T.-O."/>
            <person name="Nomura Y."/>
            <person name="Togiya S."/>
            <person name="Komai F."/>
            <person name="Hara R."/>
            <person name="Takeuchi K."/>
            <person name="Arita M."/>
            <person name="Imose N."/>
            <person name="Musashino K."/>
            <person name="Yuuki H."/>
            <person name="Oshima A."/>
            <person name="Sasaki N."/>
            <person name="Aotsuka S."/>
            <person name="Yoshikawa Y."/>
            <person name="Matsunawa H."/>
            <person name="Ichihara T."/>
            <person name="Shiohata N."/>
            <person name="Sano S."/>
            <person name="Moriya S."/>
            <person name="Momiyama H."/>
            <person name="Satoh N."/>
            <person name="Takami S."/>
            <person name="Terashima Y."/>
            <person name="Suzuki O."/>
            <person name="Nakagawa S."/>
            <person name="Senoh A."/>
            <person name="Mizoguchi H."/>
            <person name="Goto Y."/>
            <person name="Shimizu F."/>
            <person name="Wakebe H."/>
            <person name="Hishigaki H."/>
            <person name="Watanabe T."/>
            <person name="Sugiyama A."/>
            <person name="Takemoto M."/>
            <person name="Kawakami B."/>
            <person name="Yamazaki M."/>
            <person name="Watanabe K."/>
            <person name="Kumagai A."/>
            <person name="Itakura S."/>
            <person name="Fukuzumi Y."/>
            <person name="Fujimori Y."/>
            <person name="Komiyama M."/>
            <person name="Tashiro H."/>
            <person name="Tanigami A."/>
            <person name="Fujiwara T."/>
            <person name="Ono T."/>
            <person name="Yamada K."/>
            <person name="Fujii Y."/>
            <person name="Ozaki K."/>
            <person name="Hirao M."/>
            <person name="Ohmori Y."/>
            <person name="Kawabata A."/>
            <person name="Hikiji T."/>
            <person name="Kobatake N."/>
            <person name="Inagaki H."/>
            <person name="Ikema Y."/>
            <person name="Okamoto S."/>
            <person name="Okitani R."/>
            <person name="Kawakami T."/>
            <person name="Noguchi S."/>
            <person name="Itoh T."/>
            <person name="Shigeta K."/>
            <person name="Senba T."/>
            <person name="Matsumura K."/>
            <person name="Nakajima Y."/>
            <person name="Mizuno T."/>
            <person name="Morinaga M."/>
            <person name="Sasaki M."/>
            <person name="Togashi T."/>
            <person name="Oyama M."/>
            <person name="Hata H."/>
            <person name="Watanabe M."/>
            <person name="Komatsu T."/>
            <person name="Mizushima-Sugano J."/>
            <person name="Satoh T."/>
            <person name="Shirai Y."/>
            <person name="Takahashi Y."/>
            <person name="Nakagawa K."/>
            <person name="Okumura K."/>
            <person name="Nagase T."/>
            <person name="Nomura N."/>
            <person name="Kikuchi H."/>
            <person name="Masuho Y."/>
            <person name="Yamashita R."/>
            <person name="Nakai K."/>
            <person name="Yada T."/>
            <person name="Nakamura Y."/>
            <person name="Ohara O."/>
            <person name="Isogai T."/>
            <person name="Sugano S."/>
        </authorList>
    </citation>
    <scope>NUCLEOTIDE SEQUENCE [LARGE SCALE MRNA]</scope>
</reference>
<reference key="2">
    <citation type="journal article" date="2001" name="Nature">
        <title>The DNA sequence and comparative analysis of human chromosome 20.</title>
        <authorList>
            <person name="Deloukas P."/>
            <person name="Matthews L.H."/>
            <person name="Ashurst J.L."/>
            <person name="Burton J."/>
            <person name="Gilbert J.G.R."/>
            <person name="Jones M."/>
            <person name="Stavrides G."/>
            <person name="Almeida J.P."/>
            <person name="Babbage A.K."/>
            <person name="Bagguley C.L."/>
            <person name="Bailey J."/>
            <person name="Barlow K.F."/>
            <person name="Bates K.N."/>
            <person name="Beard L.M."/>
            <person name="Beare D.M."/>
            <person name="Beasley O.P."/>
            <person name="Bird C.P."/>
            <person name="Blakey S.E."/>
            <person name="Bridgeman A.M."/>
            <person name="Brown A.J."/>
            <person name="Buck D."/>
            <person name="Burrill W.D."/>
            <person name="Butler A.P."/>
            <person name="Carder C."/>
            <person name="Carter N.P."/>
            <person name="Chapman J.C."/>
            <person name="Clamp M."/>
            <person name="Clark G."/>
            <person name="Clark L.N."/>
            <person name="Clark S.Y."/>
            <person name="Clee C.M."/>
            <person name="Clegg S."/>
            <person name="Cobley V.E."/>
            <person name="Collier R.E."/>
            <person name="Connor R.E."/>
            <person name="Corby N.R."/>
            <person name="Coulson A."/>
            <person name="Coville G.J."/>
            <person name="Deadman R."/>
            <person name="Dhami P.D."/>
            <person name="Dunn M."/>
            <person name="Ellington A.G."/>
            <person name="Frankland J.A."/>
            <person name="Fraser A."/>
            <person name="French L."/>
            <person name="Garner P."/>
            <person name="Grafham D.V."/>
            <person name="Griffiths C."/>
            <person name="Griffiths M.N.D."/>
            <person name="Gwilliam R."/>
            <person name="Hall R.E."/>
            <person name="Hammond S."/>
            <person name="Harley J.L."/>
            <person name="Heath P.D."/>
            <person name="Ho S."/>
            <person name="Holden J.L."/>
            <person name="Howden P.J."/>
            <person name="Huckle E."/>
            <person name="Hunt A.R."/>
            <person name="Hunt S.E."/>
            <person name="Jekosch K."/>
            <person name="Johnson C.M."/>
            <person name="Johnson D."/>
            <person name="Kay M.P."/>
            <person name="Kimberley A.M."/>
            <person name="King A."/>
            <person name="Knights A."/>
            <person name="Laird G.K."/>
            <person name="Lawlor S."/>
            <person name="Lehvaeslaiho M.H."/>
            <person name="Leversha M.A."/>
            <person name="Lloyd C."/>
            <person name="Lloyd D.M."/>
            <person name="Lovell J.D."/>
            <person name="Marsh V.L."/>
            <person name="Martin S.L."/>
            <person name="McConnachie L.J."/>
            <person name="McLay K."/>
            <person name="McMurray A.A."/>
            <person name="Milne S.A."/>
            <person name="Mistry D."/>
            <person name="Moore M.J.F."/>
            <person name="Mullikin J.C."/>
            <person name="Nickerson T."/>
            <person name="Oliver K."/>
            <person name="Parker A."/>
            <person name="Patel R."/>
            <person name="Pearce T.A.V."/>
            <person name="Peck A.I."/>
            <person name="Phillimore B.J.C.T."/>
            <person name="Prathalingam S.R."/>
            <person name="Plumb R.W."/>
            <person name="Ramsay H."/>
            <person name="Rice C.M."/>
            <person name="Ross M.T."/>
            <person name="Scott C.E."/>
            <person name="Sehra H.K."/>
            <person name="Shownkeen R."/>
            <person name="Sims S."/>
            <person name="Skuce C.D."/>
            <person name="Smith M.L."/>
            <person name="Soderlund C."/>
            <person name="Steward C.A."/>
            <person name="Sulston J.E."/>
            <person name="Swann R.M."/>
            <person name="Sycamore N."/>
            <person name="Taylor R."/>
            <person name="Tee L."/>
            <person name="Thomas D.W."/>
            <person name="Thorpe A."/>
            <person name="Tracey A."/>
            <person name="Tromans A.C."/>
            <person name="Vaudin M."/>
            <person name="Wall M."/>
            <person name="Wallis J.M."/>
            <person name="Whitehead S.L."/>
            <person name="Whittaker P."/>
            <person name="Willey D.L."/>
            <person name="Williams L."/>
            <person name="Williams S.A."/>
            <person name="Wilming L."/>
            <person name="Wray P.W."/>
            <person name="Hubbard T."/>
            <person name="Durbin R.M."/>
            <person name="Bentley D.R."/>
            <person name="Beck S."/>
            <person name="Rogers J."/>
        </authorList>
    </citation>
    <scope>NUCLEOTIDE SEQUENCE [LARGE SCALE GENOMIC DNA]</scope>
</reference>
<reference key="3">
    <citation type="journal article" date="2004" name="Genome Res.">
        <title>The status, quality, and expansion of the NIH full-length cDNA project: the Mammalian Gene Collection (MGC).</title>
        <authorList>
            <consortium name="The MGC Project Team"/>
        </authorList>
    </citation>
    <scope>NUCLEOTIDE SEQUENCE [LARGE SCALE MRNA]</scope>
    <scope>VARIANTS LEU-298 AND VAL-483</scope>
    <source>
        <tissue>Brain</tissue>
        <tissue>Cervix</tissue>
        <tissue>Ovary</tissue>
    </source>
</reference>
<reference key="4">
    <citation type="journal article" date="2003" name="Proc. Natl. Acad. Sci. U.S.A.">
        <title>Immunomic analysis of human sarcoma.</title>
        <authorList>
            <person name="Lee S.-Y."/>
            <person name="Obata Y."/>
            <person name="Yoshida M."/>
            <person name="Stockert E."/>
            <person name="Williamson B."/>
            <person name="Jungbluth A.A."/>
            <person name="Chen Y.-T."/>
            <person name="Old L.J."/>
            <person name="Scanlan M.J."/>
        </authorList>
    </citation>
    <scope>NUCLEOTIDE SEQUENCE [MRNA] OF 69-348</scope>
</reference>
<reference key="5">
    <citation type="journal article" date="2005" name="J. Biol. Chem.">
        <title>A mammalian chromatin remodeling complex with similarities to the yeast INO80 complex.</title>
        <authorList>
            <person name="Jin J."/>
            <person name="Cai Y."/>
            <person name="Yao T."/>
            <person name="Gottschalk A.J."/>
            <person name="Florens L."/>
            <person name="Swanson S.K."/>
            <person name="Gutierrez J.L."/>
            <person name="Coleman M.K."/>
            <person name="Workman J.L."/>
            <person name="Mushegian A."/>
            <person name="Washburn M.P."/>
            <person name="Conaway R.C."/>
            <person name="Conaway J.W."/>
        </authorList>
    </citation>
    <scope>IDENTIFICATION IN THE INO80 COMPLEX</scope>
    <scope>IDENTIFICATION BY MASS SPECTROMETRY</scope>
</reference>
<reference key="6">
    <citation type="journal article" date="2007" name="Nat. Struct. Mol. Biol.">
        <title>A YY1-INO80 complex regulates genomic stability through homologous recombination-based repair.</title>
        <authorList>
            <person name="Wu S."/>
            <person name="Shi Y."/>
            <person name="Mulligan P."/>
            <person name="Gay F."/>
            <person name="Landry J."/>
            <person name="Liu H."/>
            <person name="Lu J."/>
            <person name="Qi H.H."/>
            <person name="Wang W."/>
            <person name="Nickoloff J.A."/>
            <person name="Wu C."/>
            <person name="Shi Y."/>
        </authorList>
    </citation>
    <scope>SUBCELLULAR LOCATION</scope>
    <scope>ASSOCIATION WITH THE INO80 COMPLEX</scope>
</reference>
<reference key="7">
    <citation type="journal article" date="2008" name="Exp. Cell Res.">
        <title>The actin-related protein hArp8 accumulates on the mitotic chromosomes and functions in chromosome alignment.</title>
        <authorList>
            <person name="Aoyama N."/>
            <person name="Oka A."/>
            <person name="Kitayama K."/>
            <person name="Kurumizaka H."/>
            <person name="Harata M."/>
        </authorList>
    </citation>
    <scope>INTERACTION WITH ACTR8</scope>
    <scope>SUBCELLULAR LOCATION</scope>
</reference>
<reference key="8">
    <citation type="journal article" date="2008" name="Mol. Cell">
        <title>Distinct modes of regulation of the Uch37 deubiquitinating enzyme in the proteasome and in the Ino80 chromatin-remodeling complex.</title>
        <authorList>
            <person name="Yao T."/>
            <person name="Song L."/>
            <person name="Jin J."/>
            <person name="Cai Y."/>
            <person name="Takahashi H."/>
            <person name="Swanson S.K."/>
            <person name="Washburn M.P."/>
            <person name="Florens L."/>
            <person name="Conaway R.C."/>
            <person name="Cohen R.E."/>
            <person name="Conaway J.W."/>
        </authorList>
    </citation>
    <scope>IDENTIFICATION IN THE INO80 COMPLEX</scope>
    <scope>IDENTIFICATION BY MASS SPECTROMETRY</scope>
</reference>
<reference key="9">
    <citation type="journal article" date="2009" name="Exp. Cell Res.">
        <title>The human actin-related protein hArp5: nucleo-cytoplasmic shuttling and involvement in DNA repair.</title>
        <authorList>
            <person name="Kitayama K."/>
            <person name="Kamo M."/>
            <person name="Oma Y."/>
            <person name="Matsuda R."/>
            <person name="Uchida T."/>
            <person name="Ikura T."/>
            <person name="Tashiro S."/>
            <person name="Ohyama T."/>
            <person name="Winsor B."/>
            <person name="Harata M."/>
        </authorList>
    </citation>
    <scope>FUNCTION</scope>
    <scope>SUBCELLULAR LOCATION</scope>
</reference>
<reference key="10">
    <citation type="journal article" date="2010" name="Proc. Natl. Acad. Sci. U.S.A.">
        <title>INO80 chromatin remodeling complex promotes the removal of UV lesions by the nucleotide excision repair pathway.</title>
        <authorList>
            <person name="Jiang Y."/>
            <person name="Wang X."/>
            <person name="Bao S."/>
            <person name="Guo R."/>
            <person name="Johnson D.G."/>
            <person name="Shen X."/>
            <person name="Li L."/>
        </authorList>
    </citation>
    <scope>FUNCTION IN DNA REPAIR</scope>
    <scope>INTERACTION WITH DDB1</scope>
    <scope>FUNCTION OF THE INO80 COMPLEX</scope>
</reference>
<reference key="11">
    <citation type="journal article" date="2011" name="J. Biol. Chem.">
        <title>Subunit organization of the human INO80 chromatin remodeling complex: An evolutionarily conserved core complex catalyzes ATP-dependent nucleosome remodeling.</title>
        <authorList>
            <person name="Chen L."/>
            <person name="Cai Y."/>
            <person name="Jin J."/>
            <person name="Florens L."/>
            <person name="Swanson S.K."/>
            <person name="Washburn M.P."/>
            <person name="Conaway J.W."/>
            <person name="Conaway R.C."/>
        </authorList>
    </citation>
    <scope>IDENTIFICATION IN THE INO80 COMPLEX</scope>
</reference>
<reference key="12">
    <citation type="journal article" date="2017" name="Nat. Struct. Mol. Biol.">
        <title>Site-specific mapping of the human SUMO proteome reveals co-modification with phosphorylation.</title>
        <authorList>
            <person name="Hendriks I.A."/>
            <person name="Lyon D."/>
            <person name="Young C."/>
            <person name="Jensen L.J."/>
            <person name="Vertegaal A.C."/>
            <person name="Nielsen M.L."/>
        </authorList>
    </citation>
    <scope>SUMOYLATION [LARGE SCALE ANALYSIS] AT LYS-283</scope>
    <scope>IDENTIFICATION BY MASS SPECTROMETRY [LARGE SCALE ANALYSIS]</scope>
</reference>